<protein>
    <recommendedName>
        <fullName evidence="1">Dephospho-CoA kinase</fullName>
        <ecNumber evidence="1">2.7.1.24</ecNumber>
    </recommendedName>
    <alternativeName>
        <fullName evidence="1">Dephosphocoenzyme A kinase</fullName>
    </alternativeName>
</protein>
<organism>
    <name type="scientific">Pasteurella multocida (strain Pm70)</name>
    <dbReference type="NCBI Taxonomy" id="272843"/>
    <lineage>
        <taxon>Bacteria</taxon>
        <taxon>Pseudomonadati</taxon>
        <taxon>Pseudomonadota</taxon>
        <taxon>Gammaproteobacteria</taxon>
        <taxon>Pasteurellales</taxon>
        <taxon>Pasteurellaceae</taxon>
        <taxon>Pasteurella</taxon>
    </lineage>
</organism>
<feature type="chain" id="PRO_0000172972" description="Dephospho-CoA kinase">
    <location>
        <begin position="1"/>
        <end position="206"/>
    </location>
</feature>
<feature type="domain" description="DPCK" evidence="1">
    <location>
        <begin position="4"/>
        <end position="204"/>
    </location>
</feature>
<feature type="binding site" evidence="1">
    <location>
        <begin position="12"/>
        <end position="17"/>
    </location>
    <ligand>
        <name>ATP</name>
        <dbReference type="ChEBI" id="CHEBI:30616"/>
    </ligand>
</feature>
<comment type="function">
    <text evidence="1">Catalyzes the phosphorylation of the 3'-hydroxyl group of dephosphocoenzyme A to form coenzyme A.</text>
</comment>
<comment type="catalytic activity">
    <reaction evidence="1">
        <text>3'-dephospho-CoA + ATP = ADP + CoA + H(+)</text>
        <dbReference type="Rhea" id="RHEA:18245"/>
        <dbReference type="ChEBI" id="CHEBI:15378"/>
        <dbReference type="ChEBI" id="CHEBI:30616"/>
        <dbReference type="ChEBI" id="CHEBI:57287"/>
        <dbReference type="ChEBI" id="CHEBI:57328"/>
        <dbReference type="ChEBI" id="CHEBI:456216"/>
        <dbReference type="EC" id="2.7.1.24"/>
    </reaction>
</comment>
<comment type="pathway">
    <text evidence="1">Cofactor biosynthesis; coenzyme A biosynthesis; CoA from (R)-pantothenate: step 5/5.</text>
</comment>
<comment type="subcellular location">
    <subcellularLocation>
        <location evidence="1">Cytoplasm</location>
    </subcellularLocation>
</comment>
<comment type="similarity">
    <text evidence="1 2">Belongs to the CoaE family.</text>
</comment>
<proteinExistence type="inferred from homology"/>
<sequence length="206" mass="23483">MTYIVGLTGGIGSGKSTIAHLFMALGVPVIDADVVARDIVTKGSELLSKIVDYFGEHILCENGELNRAKLRERIFRHPEDKVWLNQLLHPAIREEMLRQLQIQTYPYVLWVVPLLIENNLTAFCQRVLVVDVEPETQIQRAMQRDNNSIELIQHIMASQVDRQTRLQFADDVIQNDADLKGNLPVLKQKVLELHHQYLQLANAQNA</sequence>
<keyword id="KW-0067">ATP-binding</keyword>
<keyword id="KW-0173">Coenzyme A biosynthesis</keyword>
<keyword id="KW-0963">Cytoplasm</keyword>
<keyword id="KW-0418">Kinase</keyword>
<keyword id="KW-0547">Nucleotide-binding</keyword>
<keyword id="KW-1185">Reference proteome</keyword>
<keyword id="KW-0808">Transferase</keyword>
<reference key="1">
    <citation type="journal article" date="2001" name="Proc. Natl. Acad. Sci. U.S.A.">
        <title>Complete genomic sequence of Pasteurella multocida Pm70.</title>
        <authorList>
            <person name="May B.J."/>
            <person name="Zhang Q."/>
            <person name="Li L.L."/>
            <person name="Paustian M.L."/>
            <person name="Whittam T.S."/>
            <person name="Kapur V."/>
        </authorList>
    </citation>
    <scope>NUCLEOTIDE SEQUENCE [LARGE SCALE GENOMIC DNA]</scope>
    <source>
        <strain>Pm70</strain>
    </source>
</reference>
<name>COAE_PASMU</name>
<gene>
    <name evidence="1" type="primary">coaE</name>
    <name type="ordered locus">PM0088</name>
</gene>
<accession>Q9CPF5</accession>
<evidence type="ECO:0000255" key="1">
    <source>
        <dbReference type="HAMAP-Rule" id="MF_00376"/>
    </source>
</evidence>
<evidence type="ECO:0000305" key="2"/>
<dbReference type="EC" id="2.7.1.24" evidence="1"/>
<dbReference type="EMBL" id="AE004439">
    <property type="protein sequence ID" value="AAK02172.1"/>
    <property type="molecule type" value="Genomic_DNA"/>
</dbReference>
<dbReference type="RefSeq" id="WP_010906475.1">
    <property type="nucleotide sequence ID" value="NC_002663.1"/>
</dbReference>
<dbReference type="SMR" id="Q9CPF5"/>
<dbReference type="STRING" id="272843.PM0088"/>
<dbReference type="EnsemblBacteria" id="AAK02172">
    <property type="protein sequence ID" value="AAK02172"/>
    <property type="gene ID" value="PM0088"/>
</dbReference>
<dbReference type="KEGG" id="pmu:PM0088"/>
<dbReference type="PATRIC" id="fig|272843.6.peg.91"/>
<dbReference type="HOGENOM" id="CLU_057180_1_2_6"/>
<dbReference type="OrthoDB" id="9812943at2"/>
<dbReference type="UniPathway" id="UPA00241">
    <property type="reaction ID" value="UER00356"/>
</dbReference>
<dbReference type="Proteomes" id="UP000000809">
    <property type="component" value="Chromosome"/>
</dbReference>
<dbReference type="GO" id="GO:0005737">
    <property type="term" value="C:cytoplasm"/>
    <property type="evidence" value="ECO:0007669"/>
    <property type="project" value="UniProtKB-SubCell"/>
</dbReference>
<dbReference type="GO" id="GO:0005524">
    <property type="term" value="F:ATP binding"/>
    <property type="evidence" value="ECO:0007669"/>
    <property type="project" value="UniProtKB-UniRule"/>
</dbReference>
<dbReference type="GO" id="GO:0004140">
    <property type="term" value="F:dephospho-CoA kinase activity"/>
    <property type="evidence" value="ECO:0007669"/>
    <property type="project" value="UniProtKB-UniRule"/>
</dbReference>
<dbReference type="GO" id="GO:0015937">
    <property type="term" value="P:coenzyme A biosynthetic process"/>
    <property type="evidence" value="ECO:0007669"/>
    <property type="project" value="UniProtKB-UniRule"/>
</dbReference>
<dbReference type="CDD" id="cd02022">
    <property type="entry name" value="DPCK"/>
    <property type="match status" value="1"/>
</dbReference>
<dbReference type="FunFam" id="3.40.50.300:FF:000518">
    <property type="entry name" value="Dephospho-CoA kinase"/>
    <property type="match status" value="1"/>
</dbReference>
<dbReference type="Gene3D" id="3.40.50.300">
    <property type="entry name" value="P-loop containing nucleotide triphosphate hydrolases"/>
    <property type="match status" value="1"/>
</dbReference>
<dbReference type="HAMAP" id="MF_00376">
    <property type="entry name" value="Dephospho_CoA_kinase"/>
    <property type="match status" value="1"/>
</dbReference>
<dbReference type="InterPro" id="IPR001977">
    <property type="entry name" value="Depp_CoAkinase"/>
</dbReference>
<dbReference type="InterPro" id="IPR027417">
    <property type="entry name" value="P-loop_NTPase"/>
</dbReference>
<dbReference type="NCBIfam" id="TIGR00152">
    <property type="entry name" value="dephospho-CoA kinase"/>
    <property type="match status" value="1"/>
</dbReference>
<dbReference type="PANTHER" id="PTHR10695:SF46">
    <property type="entry name" value="BIFUNCTIONAL COENZYME A SYNTHASE-RELATED"/>
    <property type="match status" value="1"/>
</dbReference>
<dbReference type="PANTHER" id="PTHR10695">
    <property type="entry name" value="DEPHOSPHO-COA KINASE-RELATED"/>
    <property type="match status" value="1"/>
</dbReference>
<dbReference type="Pfam" id="PF01121">
    <property type="entry name" value="CoaE"/>
    <property type="match status" value="1"/>
</dbReference>
<dbReference type="SUPFAM" id="SSF52540">
    <property type="entry name" value="P-loop containing nucleoside triphosphate hydrolases"/>
    <property type="match status" value="1"/>
</dbReference>
<dbReference type="PROSITE" id="PS51219">
    <property type="entry name" value="DPCK"/>
    <property type="match status" value="1"/>
</dbReference>